<feature type="initiator methionine" description="Removed" evidence="2">
    <location>
        <position position="1"/>
    </location>
</feature>
<feature type="chain" id="PRO_0000144486" description="ATP synthase subunit beta">
    <location>
        <begin position="2"/>
        <end position="467"/>
    </location>
</feature>
<feature type="binding site" evidence="1">
    <location>
        <begin position="150"/>
        <end position="157"/>
    </location>
    <ligand>
        <name>ATP</name>
        <dbReference type="ChEBI" id="CHEBI:30616"/>
    </ligand>
</feature>
<organism>
    <name type="scientific">Vibrio alginolyticus</name>
    <dbReference type="NCBI Taxonomy" id="663"/>
    <lineage>
        <taxon>Bacteria</taxon>
        <taxon>Pseudomonadati</taxon>
        <taxon>Pseudomonadota</taxon>
        <taxon>Gammaproteobacteria</taxon>
        <taxon>Vibrionales</taxon>
        <taxon>Vibrionaceae</taxon>
        <taxon>Vibrio</taxon>
    </lineage>
</organism>
<evidence type="ECO:0000255" key="1">
    <source>
        <dbReference type="HAMAP-Rule" id="MF_01347"/>
    </source>
</evidence>
<evidence type="ECO:0000269" key="2">
    <source>
    </source>
</evidence>
<proteinExistence type="evidence at protein level"/>
<gene>
    <name evidence="1" type="primary">atpD</name>
    <name type="synonym">uncD</name>
</gene>
<comment type="function">
    <text evidence="1">Produces ATP from ADP in the presence of a proton gradient across the membrane. The catalytic sites are hosted primarily by the beta subunits.</text>
</comment>
<comment type="catalytic activity">
    <reaction evidence="1">
        <text>ATP + H2O + 4 H(+)(in) = ADP + phosphate + 5 H(+)(out)</text>
        <dbReference type="Rhea" id="RHEA:57720"/>
        <dbReference type="ChEBI" id="CHEBI:15377"/>
        <dbReference type="ChEBI" id="CHEBI:15378"/>
        <dbReference type="ChEBI" id="CHEBI:30616"/>
        <dbReference type="ChEBI" id="CHEBI:43474"/>
        <dbReference type="ChEBI" id="CHEBI:456216"/>
        <dbReference type="EC" id="7.1.2.2"/>
    </reaction>
</comment>
<comment type="subunit">
    <text evidence="1">F-type ATPases have 2 components, CF(1) - the catalytic core - and CF(0) - the membrane proton channel. CF(1) has five subunits: alpha(3), beta(3), gamma(1), delta(1), epsilon(1). CF(0) has three main subunits: a(1), b(2) and c(9-12). The alpha and beta chains form an alternating ring which encloses part of the gamma chain. CF(1) is attached to CF(0) by a central stalk formed by the gamma and epsilon chains, while a peripheral stalk is formed by the delta and b chains.</text>
</comment>
<comment type="subcellular location">
    <subcellularLocation>
        <location evidence="1">Cell inner membrane</location>
        <topology evidence="1">Peripheral membrane protein</topology>
    </subcellularLocation>
</comment>
<comment type="similarity">
    <text evidence="1">Belongs to the ATPase alpha/beta chains family.</text>
</comment>
<reference key="1">
    <citation type="journal article" date="1989" name="Nucleic Acids Res.">
        <title>Nucleotide sequence of the unc operon of Vibrio alginolyticus.</title>
        <authorList>
            <person name="Krumholz L.R."/>
            <person name="Esser U."/>
            <person name="Simoni R.D."/>
        </authorList>
    </citation>
    <scope>NUCLEOTIDE SEQUENCE [GENOMIC DNA]</scope>
    <source>
        <strain>138-2</strain>
    </source>
</reference>
<reference key="2">
    <citation type="journal article" date="1989" name="FEBS Lett.">
        <title>The F1-ATPase of Vibrio alginolyticus. Purification and N-terminal sequence of major subunits.</title>
        <authorList>
            <person name="Dmitirev O.Y."/>
            <person name="Grinkevich V.A."/>
            <person name="Skulachev V.P."/>
        </authorList>
    </citation>
    <scope>PROTEIN SEQUENCE OF 2-19</scope>
    <source>
        <strain>138-2</strain>
    </source>
</reference>
<name>ATPB_VIBAL</name>
<keyword id="KW-0066">ATP synthesis</keyword>
<keyword id="KW-0067">ATP-binding</keyword>
<keyword id="KW-0997">Cell inner membrane</keyword>
<keyword id="KW-1003">Cell membrane</keyword>
<keyword id="KW-0139">CF(1)</keyword>
<keyword id="KW-0903">Direct protein sequencing</keyword>
<keyword id="KW-0375">Hydrogen ion transport</keyword>
<keyword id="KW-0406">Ion transport</keyword>
<keyword id="KW-0472">Membrane</keyword>
<keyword id="KW-0547">Nucleotide-binding</keyword>
<keyword id="KW-1278">Translocase</keyword>
<keyword id="KW-0813">Transport</keyword>
<accession>P12986</accession>
<protein>
    <recommendedName>
        <fullName evidence="1">ATP synthase subunit beta</fullName>
        <ecNumber evidence="1">7.1.2.2</ecNumber>
    </recommendedName>
    <alternativeName>
        <fullName evidence="1">ATP synthase F1 sector subunit beta</fullName>
    </alternativeName>
    <alternativeName>
        <fullName evidence="1">F-ATPase subunit beta</fullName>
    </alternativeName>
</protein>
<sequence length="467" mass="50699">MATGKIVQIIGAVVDVEFPQSNVPSVYDALNVTDSKERLVLEVQQQLGGGVVRCIVMGSSDGLRRGVEVVNTGAPISVPVGTKTLGRIMNVLGDAIDERGEVGAEEVYSIHRSAPSYEEQSNEIALLETGVKVIDLICPFAKGGKIGLFGGAGVGKTVNMMELINNIALQHSGLSVFAGVGERTREGNDFYYEMQEAGVVNVEKPEESKVAMVYGQMNEPPGNRLRVALTGLTMAERFRDEGRDVLLFIDNIYRYTLAGTEVSALLGRMPSAVGYQPTLAEEMGVLQERITSTKSGSITSVQAVYVPADDLTDPSPATTFAHLDATVVLNRNIAAMGLYPAIDPLDSTSRMLDPLVVGQDHYEVARGVQQTLQRYKELKDIIAILGMDELSEEDKQVVSRARKIERFLTQPYHVAEVFTGDPGIYVPLKETLRGFKGLLAGEYDDIPEQAFMYCGSIDDAIENAKKL</sequence>
<dbReference type="EC" id="7.1.2.2" evidence="1"/>
<dbReference type="EMBL" id="X16050">
    <property type="protein sequence ID" value="CAA34181.1"/>
    <property type="molecule type" value="Genomic_DNA"/>
</dbReference>
<dbReference type="PIR" id="S06082">
    <property type="entry name" value="S06082"/>
</dbReference>
<dbReference type="RefSeq" id="WP_005383849.1">
    <property type="nucleotide sequence ID" value="NZ_WAHT01000005.1"/>
</dbReference>
<dbReference type="SMR" id="P12986"/>
<dbReference type="STRING" id="663.BAU10_15080"/>
<dbReference type="GeneID" id="57839136"/>
<dbReference type="eggNOG" id="COG0055">
    <property type="taxonomic scope" value="Bacteria"/>
</dbReference>
<dbReference type="OrthoDB" id="9801639at2"/>
<dbReference type="GO" id="GO:0005886">
    <property type="term" value="C:plasma membrane"/>
    <property type="evidence" value="ECO:0007669"/>
    <property type="project" value="UniProtKB-SubCell"/>
</dbReference>
<dbReference type="GO" id="GO:0045259">
    <property type="term" value="C:proton-transporting ATP synthase complex"/>
    <property type="evidence" value="ECO:0007669"/>
    <property type="project" value="UniProtKB-KW"/>
</dbReference>
<dbReference type="GO" id="GO:0005524">
    <property type="term" value="F:ATP binding"/>
    <property type="evidence" value="ECO:0007669"/>
    <property type="project" value="UniProtKB-UniRule"/>
</dbReference>
<dbReference type="GO" id="GO:0016887">
    <property type="term" value="F:ATP hydrolysis activity"/>
    <property type="evidence" value="ECO:0007669"/>
    <property type="project" value="InterPro"/>
</dbReference>
<dbReference type="GO" id="GO:0046933">
    <property type="term" value="F:proton-transporting ATP synthase activity, rotational mechanism"/>
    <property type="evidence" value="ECO:0007669"/>
    <property type="project" value="UniProtKB-UniRule"/>
</dbReference>
<dbReference type="CDD" id="cd18110">
    <property type="entry name" value="ATP-synt_F1_beta_C"/>
    <property type="match status" value="1"/>
</dbReference>
<dbReference type="CDD" id="cd18115">
    <property type="entry name" value="ATP-synt_F1_beta_N"/>
    <property type="match status" value="1"/>
</dbReference>
<dbReference type="CDD" id="cd01133">
    <property type="entry name" value="F1-ATPase_beta_CD"/>
    <property type="match status" value="1"/>
</dbReference>
<dbReference type="FunFam" id="1.10.1140.10:FF:000001">
    <property type="entry name" value="ATP synthase subunit beta"/>
    <property type="match status" value="1"/>
</dbReference>
<dbReference type="FunFam" id="2.40.10.170:FF:000003">
    <property type="entry name" value="ATP synthase subunit beta"/>
    <property type="match status" value="1"/>
</dbReference>
<dbReference type="FunFam" id="3.40.50.300:FF:000004">
    <property type="entry name" value="ATP synthase subunit beta"/>
    <property type="match status" value="1"/>
</dbReference>
<dbReference type="Gene3D" id="2.40.10.170">
    <property type="match status" value="1"/>
</dbReference>
<dbReference type="Gene3D" id="1.10.1140.10">
    <property type="entry name" value="Bovine Mitochondrial F1-atpase, Atp Synthase Beta Chain, Chain D, domain 3"/>
    <property type="match status" value="1"/>
</dbReference>
<dbReference type="Gene3D" id="3.40.50.300">
    <property type="entry name" value="P-loop containing nucleotide triphosphate hydrolases"/>
    <property type="match status" value="1"/>
</dbReference>
<dbReference type="HAMAP" id="MF_01347">
    <property type="entry name" value="ATP_synth_beta_bact"/>
    <property type="match status" value="1"/>
</dbReference>
<dbReference type="InterPro" id="IPR003593">
    <property type="entry name" value="AAA+_ATPase"/>
</dbReference>
<dbReference type="InterPro" id="IPR055190">
    <property type="entry name" value="ATP-synt_VA_C"/>
</dbReference>
<dbReference type="InterPro" id="IPR005722">
    <property type="entry name" value="ATP_synth_F1_bsu"/>
</dbReference>
<dbReference type="InterPro" id="IPR020003">
    <property type="entry name" value="ATPase_a/bsu_AS"/>
</dbReference>
<dbReference type="InterPro" id="IPR050053">
    <property type="entry name" value="ATPase_alpha/beta_chains"/>
</dbReference>
<dbReference type="InterPro" id="IPR004100">
    <property type="entry name" value="ATPase_F1/V1/A1_a/bsu_N"/>
</dbReference>
<dbReference type="InterPro" id="IPR036121">
    <property type="entry name" value="ATPase_F1/V1/A1_a/bsu_N_sf"/>
</dbReference>
<dbReference type="InterPro" id="IPR000194">
    <property type="entry name" value="ATPase_F1/V1/A1_a/bsu_nucl-bd"/>
</dbReference>
<dbReference type="InterPro" id="IPR024034">
    <property type="entry name" value="ATPase_F1/V1_b/a_C"/>
</dbReference>
<dbReference type="InterPro" id="IPR027417">
    <property type="entry name" value="P-loop_NTPase"/>
</dbReference>
<dbReference type="NCBIfam" id="TIGR01039">
    <property type="entry name" value="atpD"/>
    <property type="match status" value="1"/>
</dbReference>
<dbReference type="PANTHER" id="PTHR15184">
    <property type="entry name" value="ATP SYNTHASE"/>
    <property type="match status" value="1"/>
</dbReference>
<dbReference type="PANTHER" id="PTHR15184:SF71">
    <property type="entry name" value="ATP SYNTHASE SUBUNIT BETA, MITOCHONDRIAL"/>
    <property type="match status" value="1"/>
</dbReference>
<dbReference type="Pfam" id="PF00006">
    <property type="entry name" value="ATP-synt_ab"/>
    <property type="match status" value="1"/>
</dbReference>
<dbReference type="Pfam" id="PF02874">
    <property type="entry name" value="ATP-synt_ab_N"/>
    <property type="match status" value="1"/>
</dbReference>
<dbReference type="Pfam" id="PF22919">
    <property type="entry name" value="ATP-synt_VA_C"/>
    <property type="match status" value="1"/>
</dbReference>
<dbReference type="SMART" id="SM00382">
    <property type="entry name" value="AAA"/>
    <property type="match status" value="1"/>
</dbReference>
<dbReference type="SUPFAM" id="SSF47917">
    <property type="entry name" value="C-terminal domain of alpha and beta subunits of F1 ATP synthase"/>
    <property type="match status" value="1"/>
</dbReference>
<dbReference type="SUPFAM" id="SSF50615">
    <property type="entry name" value="N-terminal domain of alpha and beta subunits of F1 ATP synthase"/>
    <property type="match status" value="1"/>
</dbReference>
<dbReference type="SUPFAM" id="SSF52540">
    <property type="entry name" value="P-loop containing nucleoside triphosphate hydrolases"/>
    <property type="match status" value="1"/>
</dbReference>
<dbReference type="PROSITE" id="PS00152">
    <property type="entry name" value="ATPASE_ALPHA_BETA"/>
    <property type="match status" value="1"/>
</dbReference>